<dbReference type="EC" id="2.7.1.48" evidence="1"/>
<dbReference type="EMBL" id="CP000653">
    <property type="protein sequence ID" value="ABP61346.1"/>
    <property type="molecule type" value="Genomic_DNA"/>
</dbReference>
<dbReference type="RefSeq" id="WP_015959679.1">
    <property type="nucleotide sequence ID" value="NC_009436.1"/>
</dbReference>
<dbReference type="SMR" id="A4WCB6"/>
<dbReference type="STRING" id="399742.Ent638_2680"/>
<dbReference type="GeneID" id="93305601"/>
<dbReference type="KEGG" id="ent:Ent638_2680"/>
<dbReference type="eggNOG" id="COG0572">
    <property type="taxonomic scope" value="Bacteria"/>
</dbReference>
<dbReference type="HOGENOM" id="CLU_021278_1_2_6"/>
<dbReference type="OrthoDB" id="9777642at2"/>
<dbReference type="UniPathway" id="UPA00574">
    <property type="reaction ID" value="UER00637"/>
</dbReference>
<dbReference type="UniPathway" id="UPA00579">
    <property type="reaction ID" value="UER00640"/>
</dbReference>
<dbReference type="Proteomes" id="UP000000230">
    <property type="component" value="Chromosome"/>
</dbReference>
<dbReference type="GO" id="GO:0005737">
    <property type="term" value="C:cytoplasm"/>
    <property type="evidence" value="ECO:0007669"/>
    <property type="project" value="UniProtKB-SubCell"/>
</dbReference>
<dbReference type="GO" id="GO:0005524">
    <property type="term" value="F:ATP binding"/>
    <property type="evidence" value="ECO:0007669"/>
    <property type="project" value="UniProtKB-UniRule"/>
</dbReference>
<dbReference type="GO" id="GO:0043771">
    <property type="term" value="F:cytidine kinase activity"/>
    <property type="evidence" value="ECO:0007669"/>
    <property type="project" value="RHEA"/>
</dbReference>
<dbReference type="GO" id="GO:0004849">
    <property type="term" value="F:uridine kinase activity"/>
    <property type="evidence" value="ECO:0007669"/>
    <property type="project" value="UniProtKB-UniRule"/>
</dbReference>
<dbReference type="GO" id="GO:0044211">
    <property type="term" value="P:CTP salvage"/>
    <property type="evidence" value="ECO:0007669"/>
    <property type="project" value="UniProtKB-UniRule"/>
</dbReference>
<dbReference type="GO" id="GO:0044206">
    <property type="term" value="P:UMP salvage"/>
    <property type="evidence" value="ECO:0007669"/>
    <property type="project" value="UniProtKB-UniRule"/>
</dbReference>
<dbReference type="CDD" id="cd02023">
    <property type="entry name" value="UMPK"/>
    <property type="match status" value="1"/>
</dbReference>
<dbReference type="FunFam" id="3.40.50.300:FF:000252">
    <property type="entry name" value="Uridine kinase"/>
    <property type="match status" value="1"/>
</dbReference>
<dbReference type="Gene3D" id="3.40.50.300">
    <property type="entry name" value="P-loop containing nucleotide triphosphate hydrolases"/>
    <property type="match status" value="1"/>
</dbReference>
<dbReference type="HAMAP" id="MF_00551">
    <property type="entry name" value="Uridine_kinase"/>
    <property type="match status" value="1"/>
</dbReference>
<dbReference type="InterPro" id="IPR027417">
    <property type="entry name" value="P-loop_NTPase"/>
</dbReference>
<dbReference type="InterPro" id="IPR006083">
    <property type="entry name" value="PRK/URK"/>
</dbReference>
<dbReference type="InterPro" id="IPR026008">
    <property type="entry name" value="Uridine_kinase"/>
</dbReference>
<dbReference type="InterPro" id="IPR000764">
    <property type="entry name" value="Uridine_kinase-like"/>
</dbReference>
<dbReference type="NCBIfam" id="NF004018">
    <property type="entry name" value="PRK05480.1"/>
    <property type="match status" value="1"/>
</dbReference>
<dbReference type="NCBIfam" id="TIGR00235">
    <property type="entry name" value="udk"/>
    <property type="match status" value="1"/>
</dbReference>
<dbReference type="PANTHER" id="PTHR10285">
    <property type="entry name" value="URIDINE KINASE"/>
    <property type="match status" value="1"/>
</dbReference>
<dbReference type="Pfam" id="PF00485">
    <property type="entry name" value="PRK"/>
    <property type="match status" value="1"/>
</dbReference>
<dbReference type="PRINTS" id="PR00988">
    <property type="entry name" value="URIDINKINASE"/>
</dbReference>
<dbReference type="SUPFAM" id="SSF52540">
    <property type="entry name" value="P-loop containing nucleoside triphosphate hydrolases"/>
    <property type="match status" value="1"/>
</dbReference>
<reference key="1">
    <citation type="journal article" date="2010" name="PLoS Genet.">
        <title>Genome sequence of the plant growth promoting endophytic bacterium Enterobacter sp. 638.</title>
        <authorList>
            <person name="Taghavi S."/>
            <person name="van der Lelie D."/>
            <person name="Hoffman A."/>
            <person name="Zhang Y.B."/>
            <person name="Walla M.D."/>
            <person name="Vangronsveld J."/>
            <person name="Newman L."/>
            <person name="Monchy S."/>
        </authorList>
    </citation>
    <scope>NUCLEOTIDE SEQUENCE [LARGE SCALE GENOMIC DNA]</scope>
    <source>
        <strain>638</strain>
    </source>
</reference>
<evidence type="ECO:0000255" key="1">
    <source>
        <dbReference type="HAMAP-Rule" id="MF_00551"/>
    </source>
</evidence>
<keyword id="KW-0067">ATP-binding</keyword>
<keyword id="KW-0963">Cytoplasm</keyword>
<keyword id="KW-0418">Kinase</keyword>
<keyword id="KW-0547">Nucleotide-binding</keyword>
<keyword id="KW-0808">Transferase</keyword>
<accession>A4WCB6</accession>
<name>URK_ENT38</name>
<sequence length="213" mass="24421">MTDKSHQCVIIGIAGASASGKSLIASTLYRELRDQVGDEHIGVIPEDSYYKDQSHLSMEERVKTNYDHPNAMDHSLLFQHLQMIKNGTPIDLPVYSYVDHTRTQDTIHIEPKKVIILEGILLLTDARLREAMNFSIFVDTPLDICLMRRIKRDVNERGRSMDSVMAQYQKTVRPMFLQFIEPSKQYADIIVPRGGKNRIAIDILKAKISQFFE</sequence>
<gene>
    <name evidence="1" type="primary">udk</name>
    <name type="ordered locus">Ent638_2680</name>
</gene>
<proteinExistence type="inferred from homology"/>
<feature type="chain" id="PRO_1000061099" description="Uridine kinase">
    <location>
        <begin position="1"/>
        <end position="213"/>
    </location>
</feature>
<feature type="binding site" evidence="1">
    <location>
        <begin position="15"/>
        <end position="22"/>
    </location>
    <ligand>
        <name>ATP</name>
        <dbReference type="ChEBI" id="CHEBI:30616"/>
    </ligand>
</feature>
<comment type="catalytic activity">
    <reaction evidence="1">
        <text>uridine + ATP = UMP + ADP + H(+)</text>
        <dbReference type="Rhea" id="RHEA:16825"/>
        <dbReference type="ChEBI" id="CHEBI:15378"/>
        <dbReference type="ChEBI" id="CHEBI:16704"/>
        <dbReference type="ChEBI" id="CHEBI:30616"/>
        <dbReference type="ChEBI" id="CHEBI:57865"/>
        <dbReference type="ChEBI" id="CHEBI:456216"/>
        <dbReference type="EC" id="2.7.1.48"/>
    </reaction>
</comment>
<comment type="catalytic activity">
    <reaction evidence="1">
        <text>cytidine + ATP = CMP + ADP + H(+)</text>
        <dbReference type="Rhea" id="RHEA:24674"/>
        <dbReference type="ChEBI" id="CHEBI:15378"/>
        <dbReference type="ChEBI" id="CHEBI:17562"/>
        <dbReference type="ChEBI" id="CHEBI:30616"/>
        <dbReference type="ChEBI" id="CHEBI:60377"/>
        <dbReference type="ChEBI" id="CHEBI:456216"/>
        <dbReference type="EC" id="2.7.1.48"/>
    </reaction>
</comment>
<comment type="pathway">
    <text evidence="1">Pyrimidine metabolism; CTP biosynthesis via salvage pathway; CTP from cytidine: step 1/3.</text>
</comment>
<comment type="pathway">
    <text evidence="1">Pyrimidine metabolism; UMP biosynthesis via salvage pathway; UMP from uridine: step 1/1.</text>
</comment>
<comment type="subcellular location">
    <subcellularLocation>
        <location evidence="1">Cytoplasm</location>
    </subcellularLocation>
</comment>
<comment type="similarity">
    <text evidence="1">Belongs to the uridine kinase family.</text>
</comment>
<organism>
    <name type="scientific">Enterobacter sp. (strain 638)</name>
    <dbReference type="NCBI Taxonomy" id="399742"/>
    <lineage>
        <taxon>Bacteria</taxon>
        <taxon>Pseudomonadati</taxon>
        <taxon>Pseudomonadota</taxon>
        <taxon>Gammaproteobacteria</taxon>
        <taxon>Enterobacterales</taxon>
        <taxon>Enterobacteriaceae</taxon>
        <taxon>Enterobacter</taxon>
    </lineage>
</organism>
<protein>
    <recommendedName>
        <fullName evidence="1">Uridine kinase</fullName>
        <ecNumber evidence="1">2.7.1.48</ecNumber>
    </recommendedName>
    <alternativeName>
        <fullName evidence="1">Cytidine monophosphokinase</fullName>
    </alternativeName>
    <alternativeName>
        <fullName evidence="1">Uridine monophosphokinase</fullName>
    </alternativeName>
</protein>